<proteinExistence type="evidence at protein level"/>
<evidence type="ECO:0000269" key="1">
    <source>
    </source>
</evidence>
<evidence type="ECO:0000269" key="2">
    <source>
    </source>
</evidence>
<evidence type="ECO:0000269" key="3">
    <source>
    </source>
</evidence>
<evidence type="ECO:0000269" key="4">
    <source>
    </source>
</evidence>
<evidence type="ECO:0000269" key="5">
    <source>
    </source>
</evidence>
<evidence type="ECO:0000269" key="6">
    <source>
    </source>
</evidence>
<evidence type="ECO:0000303" key="7">
    <source>
    </source>
</evidence>
<evidence type="ECO:0000303" key="8">
    <source>
    </source>
</evidence>
<evidence type="ECO:0000305" key="9"/>
<evidence type="ECO:0000312" key="10">
    <source>
        <dbReference type="Araport" id="AT4G29340"/>
    </source>
</evidence>
<evidence type="ECO:0000312" key="11">
    <source>
        <dbReference type="EMBL" id="CAB79692.1"/>
    </source>
</evidence>
<comment type="function">
    <text evidence="2 4 5 6">Binds to actin monomers and regulates the organization of the actin cytoskeleton (PubMed:29861135). At high concentrations, profilin prevents the polymerization of actin, whereas it enhances it at low concentrations (PubMed:29861135). At low concentrations, associates with the poly-proline motif of formins to enhance actin filament elongation rate (PubMed:16313636, PubMed:26996265, PubMed:29861135). Acts redundantly with PRF5 to regulate apical actin polymerization at the tip of pollen tube and control polarized pollen tube growth (PubMed:26433093). Functions probably by favoring formin-mediated actin polymerization at pollen tube tips (PubMed:26433093).</text>
</comment>
<comment type="subunit">
    <text evidence="9">Occurs in many kinds of cells as a complex with monomeric actin in a 1:1 ratio.</text>
</comment>
<comment type="subcellular location">
    <subcellularLocation>
        <location evidence="9">Cytoplasm</location>
        <location evidence="9">Cytoskeleton</location>
    </subcellularLocation>
    <subcellularLocation>
        <location evidence="3">Cytoplasm</location>
    </subcellularLocation>
</comment>
<comment type="tissue specificity">
    <text evidence="1">Specifically expressed in mature and germinating pollen grains, and growing pollen tubes (at protein level).</text>
</comment>
<comment type="disruption phenotype">
    <text evidence="4">In germinating pollen grain, the double mutant prf4 and prf5 reduces the amount of F-actin and induces disorganization of actin filaments within the apical and subapical regions of the pollen tube.</text>
</comment>
<comment type="similarity">
    <text evidence="9">Belongs to the profilin family.</text>
</comment>
<organism>
    <name type="scientific">Arabidopsis thaliana</name>
    <name type="common">Mouse-ear cress</name>
    <dbReference type="NCBI Taxonomy" id="3702"/>
    <lineage>
        <taxon>Eukaryota</taxon>
        <taxon>Viridiplantae</taxon>
        <taxon>Streptophyta</taxon>
        <taxon>Embryophyta</taxon>
        <taxon>Tracheophyta</taxon>
        <taxon>Spermatophyta</taxon>
        <taxon>Magnoliopsida</taxon>
        <taxon>eudicotyledons</taxon>
        <taxon>Gunneridae</taxon>
        <taxon>Pentapetalae</taxon>
        <taxon>rosids</taxon>
        <taxon>malvids</taxon>
        <taxon>Brassicales</taxon>
        <taxon>Brassicaceae</taxon>
        <taxon>Camelineae</taxon>
        <taxon>Arabidopsis</taxon>
    </lineage>
</organism>
<sequence length="134" mass="14418">MSWQTYVDEHLMCDVGDGQGHHLTAAAIVGHDGSVWAQSANFPQFKGQEFSDIMKDFDEPGHLAPTGLFMAGAKYMVIQGEPGAVIRGKKGAGGITIKKTGQSCVFGIYEEPVTPGQCNMVVERLGDYLLEQGL</sequence>
<protein>
    <recommendedName>
        <fullName>Profilin-4</fullName>
    </recommendedName>
    <alternativeName>
        <fullName evidence="9">AtPROF3</fullName>
    </alternativeName>
    <alternativeName>
        <fullName evidence="9">AthPRF4</fullName>
    </alternativeName>
</protein>
<feature type="chain" id="PRO_0000199617" description="Profilin-4">
    <location>
        <begin position="1"/>
        <end position="134"/>
    </location>
</feature>
<feature type="sequence conflict" description="In Ref. 4; AAO41991." evidence="9" ref="4">
    <original>Q</original>
    <variation>R</variation>
    <location>
        <position position="132"/>
    </location>
</feature>
<accession>Q38904</accession>
<accession>A0A178UXH3</accession>
<accession>Q29PU0</accession>
<accession>Q84WD4</accession>
<keyword id="KW-0009">Actin-binding</keyword>
<keyword id="KW-0963">Cytoplasm</keyword>
<keyword id="KW-0206">Cytoskeleton</keyword>
<keyword id="KW-1185">Reference proteome</keyword>
<gene>
    <name evidence="7" type="primary">PRF4</name>
    <name evidence="8" type="synonym">PFN3</name>
    <name evidence="9" type="synonym">PRO3</name>
    <name evidence="10" type="ordered locus">At4g29340</name>
    <name evidence="11" type="ORF">F17A13.160</name>
</gene>
<reference key="1">
    <citation type="journal article" date="1996" name="Plant J.">
        <title>Arabidopsis profilins are functionally similar to yeast profilins: identification of a vascular bundle-specific profilin and a pollen-specific profilin.</title>
        <authorList>
            <person name="Christensen H.E.M."/>
            <person name="Ramachandran S."/>
            <person name="Tan C.T."/>
            <person name="Surana U."/>
            <person name="Dong C.H."/>
            <person name="Chua N.-H."/>
        </authorList>
    </citation>
    <scope>NUCLEOTIDE SEQUENCE [GENOMIC DNA]</scope>
    <source>
        <strain>cv. Columbia</strain>
    </source>
</reference>
<reference key="2">
    <citation type="journal article" date="1999" name="Nature">
        <title>Sequence and analysis of chromosome 4 of the plant Arabidopsis thaliana.</title>
        <authorList>
            <person name="Mayer K.F.X."/>
            <person name="Schueller C."/>
            <person name="Wambutt R."/>
            <person name="Murphy G."/>
            <person name="Volckaert G."/>
            <person name="Pohl T."/>
            <person name="Duesterhoeft A."/>
            <person name="Stiekema W."/>
            <person name="Entian K.-D."/>
            <person name="Terryn N."/>
            <person name="Harris B."/>
            <person name="Ansorge W."/>
            <person name="Brandt P."/>
            <person name="Grivell L.A."/>
            <person name="Rieger M."/>
            <person name="Weichselgartner M."/>
            <person name="de Simone V."/>
            <person name="Obermaier B."/>
            <person name="Mache R."/>
            <person name="Mueller M."/>
            <person name="Kreis M."/>
            <person name="Delseny M."/>
            <person name="Puigdomenech P."/>
            <person name="Watson M."/>
            <person name="Schmidtheini T."/>
            <person name="Reichert B."/>
            <person name="Portetelle D."/>
            <person name="Perez-Alonso M."/>
            <person name="Boutry M."/>
            <person name="Bancroft I."/>
            <person name="Vos P."/>
            <person name="Hoheisel J."/>
            <person name="Zimmermann W."/>
            <person name="Wedler H."/>
            <person name="Ridley P."/>
            <person name="Langham S.-A."/>
            <person name="McCullagh B."/>
            <person name="Bilham L."/>
            <person name="Robben J."/>
            <person name="van der Schueren J."/>
            <person name="Grymonprez B."/>
            <person name="Chuang Y.-J."/>
            <person name="Vandenbussche F."/>
            <person name="Braeken M."/>
            <person name="Weltjens I."/>
            <person name="Voet M."/>
            <person name="Bastiaens I."/>
            <person name="Aert R."/>
            <person name="Defoor E."/>
            <person name="Weitzenegger T."/>
            <person name="Bothe G."/>
            <person name="Ramsperger U."/>
            <person name="Hilbert H."/>
            <person name="Braun M."/>
            <person name="Holzer E."/>
            <person name="Brandt A."/>
            <person name="Peters S."/>
            <person name="van Staveren M."/>
            <person name="Dirkse W."/>
            <person name="Mooijman P."/>
            <person name="Klein Lankhorst R."/>
            <person name="Rose M."/>
            <person name="Hauf J."/>
            <person name="Koetter P."/>
            <person name="Berneiser S."/>
            <person name="Hempel S."/>
            <person name="Feldpausch M."/>
            <person name="Lamberth S."/>
            <person name="Van den Daele H."/>
            <person name="De Keyser A."/>
            <person name="Buysshaert C."/>
            <person name="Gielen J."/>
            <person name="Villarroel R."/>
            <person name="De Clercq R."/>
            <person name="van Montagu M."/>
            <person name="Rogers J."/>
            <person name="Cronin A."/>
            <person name="Quail M.A."/>
            <person name="Bray-Allen S."/>
            <person name="Clark L."/>
            <person name="Doggett J."/>
            <person name="Hall S."/>
            <person name="Kay M."/>
            <person name="Lennard N."/>
            <person name="McLay K."/>
            <person name="Mayes R."/>
            <person name="Pettett A."/>
            <person name="Rajandream M.A."/>
            <person name="Lyne M."/>
            <person name="Benes V."/>
            <person name="Rechmann S."/>
            <person name="Borkova D."/>
            <person name="Bloecker H."/>
            <person name="Scharfe M."/>
            <person name="Grimm M."/>
            <person name="Loehnert T.-H."/>
            <person name="Dose S."/>
            <person name="de Haan M."/>
            <person name="Maarse A.C."/>
            <person name="Schaefer M."/>
            <person name="Mueller-Auer S."/>
            <person name="Gabel C."/>
            <person name="Fuchs M."/>
            <person name="Fartmann B."/>
            <person name="Granderath K."/>
            <person name="Dauner D."/>
            <person name="Herzl A."/>
            <person name="Neumann S."/>
            <person name="Argiriou A."/>
            <person name="Vitale D."/>
            <person name="Liguori R."/>
            <person name="Piravandi E."/>
            <person name="Massenet O."/>
            <person name="Quigley F."/>
            <person name="Clabauld G."/>
            <person name="Muendlein A."/>
            <person name="Felber R."/>
            <person name="Schnabl S."/>
            <person name="Hiller R."/>
            <person name="Schmidt W."/>
            <person name="Lecharny A."/>
            <person name="Aubourg S."/>
            <person name="Chefdor F."/>
            <person name="Cooke R."/>
            <person name="Berger C."/>
            <person name="Monfort A."/>
            <person name="Casacuberta E."/>
            <person name="Gibbons T."/>
            <person name="Weber N."/>
            <person name="Vandenbol M."/>
            <person name="Bargues M."/>
            <person name="Terol J."/>
            <person name="Torres A."/>
            <person name="Perez-Perez A."/>
            <person name="Purnelle B."/>
            <person name="Bent E."/>
            <person name="Johnson S."/>
            <person name="Tacon D."/>
            <person name="Jesse T."/>
            <person name="Heijnen L."/>
            <person name="Schwarz S."/>
            <person name="Scholler P."/>
            <person name="Heber S."/>
            <person name="Francs P."/>
            <person name="Bielke C."/>
            <person name="Frishman D."/>
            <person name="Haase D."/>
            <person name="Lemcke K."/>
            <person name="Mewes H.-W."/>
            <person name="Stocker S."/>
            <person name="Zaccaria P."/>
            <person name="Bevan M."/>
            <person name="Wilson R.K."/>
            <person name="de la Bastide M."/>
            <person name="Habermann K."/>
            <person name="Parnell L."/>
            <person name="Dedhia N."/>
            <person name="Gnoj L."/>
            <person name="Schutz K."/>
            <person name="Huang E."/>
            <person name="Spiegel L."/>
            <person name="Sekhon M."/>
            <person name="Murray J."/>
            <person name="Sheet P."/>
            <person name="Cordes M."/>
            <person name="Abu-Threideh J."/>
            <person name="Stoneking T."/>
            <person name="Kalicki J."/>
            <person name="Graves T."/>
            <person name="Harmon G."/>
            <person name="Edwards J."/>
            <person name="Latreille P."/>
            <person name="Courtney L."/>
            <person name="Cloud J."/>
            <person name="Abbott A."/>
            <person name="Scott K."/>
            <person name="Johnson D."/>
            <person name="Minx P."/>
            <person name="Bentley D."/>
            <person name="Fulton B."/>
            <person name="Miller N."/>
            <person name="Greco T."/>
            <person name="Kemp K."/>
            <person name="Kramer J."/>
            <person name="Fulton L."/>
            <person name="Mardis E."/>
            <person name="Dante M."/>
            <person name="Pepin K."/>
            <person name="Hillier L.W."/>
            <person name="Nelson J."/>
            <person name="Spieth J."/>
            <person name="Ryan E."/>
            <person name="Andrews S."/>
            <person name="Geisel C."/>
            <person name="Layman D."/>
            <person name="Du H."/>
            <person name="Ali J."/>
            <person name="Berghoff A."/>
            <person name="Jones K."/>
            <person name="Drone K."/>
            <person name="Cotton M."/>
            <person name="Joshu C."/>
            <person name="Antonoiu B."/>
            <person name="Zidanic M."/>
            <person name="Strong C."/>
            <person name="Sun H."/>
            <person name="Lamar B."/>
            <person name="Yordan C."/>
            <person name="Ma P."/>
            <person name="Zhong J."/>
            <person name="Preston R."/>
            <person name="Vil D."/>
            <person name="Shekher M."/>
            <person name="Matero A."/>
            <person name="Shah R."/>
            <person name="Swaby I.K."/>
            <person name="O'Shaughnessy A."/>
            <person name="Rodriguez M."/>
            <person name="Hoffman J."/>
            <person name="Till S."/>
            <person name="Granat S."/>
            <person name="Shohdy N."/>
            <person name="Hasegawa A."/>
            <person name="Hameed A."/>
            <person name="Lodhi M."/>
            <person name="Johnson A."/>
            <person name="Chen E."/>
            <person name="Marra M.A."/>
            <person name="Martienssen R."/>
            <person name="McCombie W.R."/>
        </authorList>
    </citation>
    <scope>NUCLEOTIDE SEQUENCE [LARGE SCALE GENOMIC DNA]</scope>
    <source>
        <strain>cv. Columbia</strain>
    </source>
</reference>
<reference key="3">
    <citation type="journal article" date="2017" name="Plant J.">
        <title>Araport11: a complete reannotation of the Arabidopsis thaliana reference genome.</title>
        <authorList>
            <person name="Cheng C.Y."/>
            <person name="Krishnakumar V."/>
            <person name="Chan A.P."/>
            <person name="Thibaud-Nissen F."/>
            <person name="Schobel S."/>
            <person name="Town C.D."/>
        </authorList>
    </citation>
    <scope>GENOME REANNOTATION</scope>
    <source>
        <strain>cv. Columbia</strain>
    </source>
</reference>
<reference key="4">
    <citation type="journal article" date="2003" name="Science">
        <title>Empirical analysis of transcriptional activity in the Arabidopsis genome.</title>
        <authorList>
            <person name="Yamada K."/>
            <person name="Lim J."/>
            <person name="Dale J.M."/>
            <person name="Chen H."/>
            <person name="Shinn P."/>
            <person name="Palm C.J."/>
            <person name="Southwick A.M."/>
            <person name="Wu H.C."/>
            <person name="Kim C.J."/>
            <person name="Nguyen M."/>
            <person name="Pham P.K."/>
            <person name="Cheuk R.F."/>
            <person name="Karlin-Newmann G."/>
            <person name="Liu S.X."/>
            <person name="Lam B."/>
            <person name="Sakano H."/>
            <person name="Wu T."/>
            <person name="Yu G."/>
            <person name="Miranda M."/>
            <person name="Quach H.L."/>
            <person name="Tripp M."/>
            <person name="Chang C.H."/>
            <person name="Lee J.M."/>
            <person name="Toriumi M.J."/>
            <person name="Chan M.M."/>
            <person name="Tang C.C."/>
            <person name="Onodera C.S."/>
            <person name="Deng J.M."/>
            <person name="Akiyama K."/>
            <person name="Ansari Y."/>
            <person name="Arakawa T."/>
            <person name="Banh J."/>
            <person name="Banno F."/>
            <person name="Bowser L."/>
            <person name="Brooks S.Y."/>
            <person name="Carninci P."/>
            <person name="Chao Q."/>
            <person name="Choy N."/>
            <person name="Enju A."/>
            <person name="Goldsmith A.D."/>
            <person name="Gurjal M."/>
            <person name="Hansen N.F."/>
            <person name="Hayashizaki Y."/>
            <person name="Johnson-Hopson C."/>
            <person name="Hsuan V.W."/>
            <person name="Iida K."/>
            <person name="Karnes M."/>
            <person name="Khan S."/>
            <person name="Koesema E."/>
            <person name="Ishida J."/>
            <person name="Jiang P.X."/>
            <person name="Jones T."/>
            <person name="Kawai J."/>
            <person name="Kamiya A."/>
            <person name="Meyers C."/>
            <person name="Nakajima M."/>
            <person name="Narusaka M."/>
            <person name="Seki M."/>
            <person name="Sakurai T."/>
            <person name="Satou M."/>
            <person name="Tamse R."/>
            <person name="Vaysberg M."/>
            <person name="Wallender E.K."/>
            <person name="Wong C."/>
            <person name="Yamamura Y."/>
            <person name="Yuan S."/>
            <person name="Shinozaki K."/>
            <person name="Davis R.W."/>
            <person name="Theologis A."/>
            <person name="Ecker J.R."/>
        </authorList>
    </citation>
    <scope>NUCLEOTIDE SEQUENCE [LARGE SCALE MRNA]</scope>
    <source>
        <strain>cv. Columbia</strain>
    </source>
</reference>
<reference key="5">
    <citation type="submission" date="2006-03" db="EMBL/GenBank/DDBJ databases">
        <title>Arabidopsis ORF clones.</title>
        <authorList>
            <person name="Kim C.J."/>
            <person name="Chen H."/>
            <person name="Shinn P."/>
            <person name="Ecker J.R."/>
        </authorList>
    </citation>
    <scope>NUCLEOTIDE SEQUENCE [MRNA]</scope>
    <source>
        <strain>cv. Columbia</strain>
    </source>
</reference>
<reference key="6">
    <citation type="submission" date="2002-03" db="EMBL/GenBank/DDBJ databases">
        <title>Full-length cDNA from Arabidopsis thaliana.</title>
        <authorList>
            <person name="Brover V.V."/>
            <person name="Troukhan M.E."/>
            <person name="Alexandrov N.A."/>
            <person name="Lu Y.-P."/>
            <person name="Flavell R.B."/>
            <person name="Feldmann K.A."/>
        </authorList>
    </citation>
    <scope>NUCLEOTIDE SEQUENCE [LARGE SCALE MRNA]</scope>
</reference>
<reference key="7">
    <citation type="journal article" date="2002" name="Cell Motil. Cytoskeleton">
        <title>Plant profilin isovariants are distinctly regulated in vegetative and reproductive tissues.</title>
        <authorList>
            <person name="Kandasamy M.K."/>
            <person name="McKinney E.C."/>
            <person name="Meagher R.B."/>
        </authorList>
    </citation>
    <scope>TISSUE SPECIFICITY</scope>
</reference>
<reference key="8">
    <citation type="journal article" date="2005" name="New Phytol.">
        <title>Arabidopsis group Ie formins localize to specific cell membrane domains, interact with actin-binding proteins and cause defects in cell expansion upon aberrant expression.</title>
        <authorList>
            <person name="Deeks M.J."/>
            <person name="Cvrckova F."/>
            <person name="Machesky L.M."/>
            <person name="Mikitova V."/>
            <person name="Ketelaar T."/>
            <person name="Zarsky V."/>
            <person name="Davies B."/>
            <person name="Hussey P.J."/>
        </authorList>
    </citation>
    <scope>FUNCTION</scope>
</reference>
<reference key="9">
    <citation type="journal article" date="2007" name="Plant Cell">
        <title>Class-specific interaction of profilin and ADF isovariants with actin in the regulation of plant development.</title>
        <authorList>
            <person name="Kandasamy M.K."/>
            <person name="Burgos-Rivera B."/>
            <person name="McKinney E.C."/>
            <person name="Ruzicka D.R."/>
            <person name="Meagher R.B."/>
        </authorList>
    </citation>
    <scope>SUBCELLULAR LOCATION</scope>
</reference>
<reference key="10">
    <citation type="journal article" date="2015" name="Mol. Plant">
        <title>Profilin regulates apical actin polymerization to control polarized pollen tube growth.</title>
        <authorList>
            <person name="Liu X."/>
            <person name="Qu X."/>
            <person name="Jiang Y."/>
            <person name="Chang M."/>
            <person name="Zhang R."/>
            <person name="Wu Y."/>
            <person name="Fu Y."/>
            <person name="Huang S."/>
        </authorList>
    </citation>
    <scope>FUNCTION</scope>
    <scope>DISRUPTION PHENOTYPE</scope>
</reference>
<reference key="11">
    <citation type="journal article" date="2016" name="Mol. Plant">
        <title>A processive Arabidopsis formin modulates actin filament dynamics in association with profilin.</title>
        <authorList>
            <person name="Zhang S."/>
            <person name="Liu C."/>
            <person name="Wang J."/>
            <person name="Ren Z."/>
            <person name="Staiger C.J."/>
            <person name="Ren H."/>
        </authorList>
    </citation>
    <scope>FUNCTION</scope>
</reference>
<reference key="12">
    <citation type="journal article" date="2018" name="Curr. Biol.">
        <title>Profilin negatively regulates formin-mediated actin assembly to modulate PAMP-triggered plant immunity.</title>
        <authorList>
            <person name="Sun H."/>
            <person name="Qiao Z."/>
            <person name="Chua K.P."/>
            <person name="Tursic A."/>
            <person name="Liu X."/>
            <person name="Gao Y.G."/>
            <person name="Mu Y."/>
            <person name="Hou X."/>
            <person name="Miao Y."/>
        </authorList>
    </citation>
    <scope>FUNCTION</scope>
</reference>
<dbReference type="EMBL" id="U43323">
    <property type="protein sequence ID" value="AAB39477.1"/>
    <property type="molecule type" value="Genomic_DNA"/>
</dbReference>
<dbReference type="EMBL" id="U43594">
    <property type="protein sequence ID" value="AAG10091.1"/>
    <property type="molecule type" value="Genomic_DNA"/>
</dbReference>
<dbReference type="EMBL" id="AL161574">
    <property type="protein sequence ID" value="CAB79692.1"/>
    <property type="molecule type" value="Genomic_DNA"/>
</dbReference>
<dbReference type="EMBL" id="CP002687">
    <property type="protein sequence ID" value="AEE85619.1"/>
    <property type="molecule type" value="Genomic_DNA"/>
</dbReference>
<dbReference type="EMBL" id="BT003946">
    <property type="protein sequence ID" value="AAO41991.1"/>
    <property type="molecule type" value="mRNA"/>
</dbReference>
<dbReference type="EMBL" id="BT024816">
    <property type="protein sequence ID" value="ABD60699.1"/>
    <property type="molecule type" value="mRNA"/>
</dbReference>
<dbReference type="EMBL" id="AY085179">
    <property type="protein sequence ID" value="AAM61730.1"/>
    <property type="molecule type" value="mRNA"/>
</dbReference>
<dbReference type="PIR" id="D85342">
    <property type="entry name" value="D85342"/>
</dbReference>
<dbReference type="RefSeq" id="NP_194663.1">
    <property type="nucleotide sequence ID" value="NM_119079.4"/>
</dbReference>
<dbReference type="SMR" id="Q38904"/>
<dbReference type="FunCoup" id="Q38904">
    <property type="interactions" value="618"/>
</dbReference>
<dbReference type="STRING" id="3702.Q38904"/>
<dbReference type="PaxDb" id="3702-AT4G29340.1"/>
<dbReference type="ProteomicsDB" id="226216"/>
<dbReference type="EnsemblPlants" id="AT4G29340.1">
    <property type="protein sequence ID" value="AT4G29340.1"/>
    <property type="gene ID" value="AT4G29340"/>
</dbReference>
<dbReference type="GeneID" id="829055"/>
<dbReference type="Gramene" id="AT4G29340.1">
    <property type="protein sequence ID" value="AT4G29340.1"/>
    <property type="gene ID" value="AT4G29340"/>
</dbReference>
<dbReference type="KEGG" id="ath:AT4G29340"/>
<dbReference type="Araport" id="AT4G29340"/>
<dbReference type="TAIR" id="AT4G29340">
    <property type="gene designation" value="PRF4"/>
</dbReference>
<dbReference type="eggNOG" id="KOG1755">
    <property type="taxonomic scope" value="Eukaryota"/>
</dbReference>
<dbReference type="HOGENOM" id="CLU_120772_0_1_1"/>
<dbReference type="InParanoid" id="Q38904"/>
<dbReference type="OMA" id="YICLYAE"/>
<dbReference type="OrthoDB" id="421374at2759"/>
<dbReference type="PhylomeDB" id="Q38904"/>
<dbReference type="PRO" id="PR:Q38904"/>
<dbReference type="Proteomes" id="UP000006548">
    <property type="component" value="Chromosome 4"/>
</dbReference>
<dbReference type="ExpressionAtlas" id="Q38904">
    <property type="expression patterns" value="baseline and differential"/>
</dbReference>
<dbReference type="GO" id="GO:0005737">
    <property type="term" value="C:cytoplasm"/>
    <property type="evidence" value="ECO:0000314"/>
    <property type="project" value="TAIR"/>
</dbReference>
<dbReference type="GO" id="GO:0005856">
    <property type="term" value="C:cytoskeleton"/>
    <property type="evidence" value="ECO:0007669"/>
    <property type="project" value="UniProtKB-SubCell"/>
</dbReference>
<dbReference type="GO" id="GO:0005634">
    <property type="term" value="C:nucleus"/>
    <property type="evidence" value="ECO:0007005"/>
    <property type="project" value="TAIR"/>
</dbReference>
<dbReference type="GO" id="GO:0003779">
    <property type="term" value="F:actin binding"/>
    <property type="evidence" value="ECO:0007669"/>
    <property type="project" value="UniProtKB-KW"/>
</dbReference>
<dbReference type="CDD" id="cd00148">
    <property type="entry name" value="PROF"/>
    <property type="match status" value="1"/>
</dbReference>
<dbReference type="FunFam" id="3.30.450.30:FF:000001">
    <property type="entry name" value="Profilin"/>
    <property type="match status" value="1"/>
</dbReference>
<dbReference type="Gene3D" id="3.30.450.30">
    <property type="entry name" value="Dynein light chain 2a, cytoplasmic"/>
    <property type="match status" value="1"/>
</dbReference>
<dbReference type="InterPro" id="IPR048278">
    <property type="entry name" value="PFN"/>
</dbReference>
<dbReference type="InterPro" id="IPR005455">
    <property type="entry name" value="PFN_euk"/>
</dbReference>
<dbReference type="InterPro" id="IPR036140">
    <property type="entry name" value="PFN_sf"/>
</dbReference>
<dbReference type="InterPro" id="IPR027310">
    <property type="entry name" value="Profilin_CS"/>
</dbReference>
<dbReference type="PANTHER" id="PTHR11604">
    <property type="entry name" value="PROFILIN"/>
    <property type="match status" value="1"/>
</dbReference>
<dbReference type="PANTHER" id="PTHR11604:SF26">
    <property type="entry name" value="PROFILIN-4"/>
    <property type="match status" value="1"/>
</dbReference>
<dbReference type="Pfam" id="PF00235">
    <property type="entry name" value="Profilin"/>
    <property type="match status" value="1"/>
</dbReference>
<dbReference type="PRINTS" id="PR00392">
    <property type="entry name" value="PROFILIN"/>
</dbReference>
<dbReference type="PRINTS" id="PR01640">
    <property type="entry name" value="PROFILINPLNT"/>
</dbReference>
<dbReference type="SMART" id="SM00392">
    <property type="entry name" value="PROF"/>
    <property type="match status" value="1"/>
</dbReference>
<dbReference type="SUPFAM" id="SSF55770">
    <property type="entry name" value="Profilin (actin-binding protein)"/>
    <property type="match status" value="1"/>
</dbReference>
<dbReference type="PROSITE" id="PS00414">
    <property type="entry name" value="PROFILIN"/>
    <property type="match status" value="1"/>
</dbReference>
<name>PRF4_ARATH</name>